<feature type="chain" id="PRO_0000315634" description="Putative lipoate-protein ligase A">
    <location>
        <begin position="1"/>
        <end position="363"/>
    </location>
</feature>
<feature type="domain" description="BPL/LPL catalytic" evidence="2">
    <location>
        <begin position="49"/>
        <end position="229"/>
    </location>
</feature>
<feature type="binding site" evidence="1">
    <location>
        <position position="91"/>
    </location>
    <ligand>
        <name>ATP</name>
        <dbReference type="ChEBI" id="CHEBI:30616"/>
    </ligand>
</feature>
<feature type="binding site" evidence="1">
    <location>
        <begin position="96"/>
        <end position="99"/>
    </location>
    <ligand>
        <name>ATP</name>
        <dbReference type="ChEBI" id="CHEBI:30616"/>
    </ligand>
</feature>
<feature type="binding site" evidence="1">
    <location>
        <position position="152"/>
    </location>
    <ligand>
        <name>(R)-lipoate</name>
        <dbReference type="ChEBI" id="CHEBI:83088"/>
    </ligand>
</feature>
<feature type="binding site" evidence="1">
    <location>
        <position position="152"/>
    </location>
    <ligand>
        <name>ATP</name>
        <dbReference type="ChEBI" id="CHEBI:30616"/>
    </ligand>
</feature>
<reference key="1">
    <citation type="journal article" date="2000" name="Yeast">
        <title>A 38 kb segment containing the cdc2 gene from the left arm of fission yeast chromosome II: sequence analysis and characterization of the genomic DNA and cDNAs encoded on the segment.</title>
        <authorList>
            <person name="Machida M."/>
            <person name="Yamazaki S."/>
            <person name="Kunihiro S."/>
            <person name="Tanaka T."/>
            <person name="Kushida N."/>
            <person name="Jinno K."/>
            <person name="Haikawa Y."/>
            <person name="Yamazaki J."/>
            <person name="Yamamoto S."/>
            <person name="Sekine M."/>
            <person name="Oguchi A."/>
            <person name="Nagai Y."/>
            <person name="Sakai M."/>
            <person name="Aoki K."/>
            <person name="Ogura K."/>
            <person name="Kudoh Y."/>
            <person name="Kikuchi H."/>
            <person name="Zhang M.Q."/>
            <person name="Yanagida M."/>
        </authorList>
    </citation>
    <scope>NUCLEOTIDE SEQUENCE [LARGE SCALE GENOMIC DNA]</scope>
    <source>
        <strain>972 / ATCC 24843</strain>
    </source>
</reference>
<reference key="2">
    <citation type="journal article" date="2002" name="Nature">
        <title>The genome sequence of Schizosaccharomyces pombe.</title>
        <authorList>
            <person name="Wood V."/>
            <person name="Gwilliam R."/>
            <person name="Rajandream M.A."/>
            <person name="Lyne M.H."/>
            <person name="Lyne R."/>
            <person name="Stewart A."/>
            <person name="Sgouros J.G."/>
            <person name="Peat N."/>
            <person name="Hayles J."/>
            <person name="Baker S.G."/>
            <person name="Basham D."/>
            <person name="Bowman S."/>
            <person name="Brooks K."/>
            <person name="Brown D."/>
            <person name="Brown S."/>
            <person name="Chillingworth T."/>
            <person name="Churcher C.M."/>
            <person name="Collins M."/>
            <person name="Connor R."/>
            <person name="Cronin A."/>
            <person name="Davis P."/>
            <person name="Feltwell T."/>
            <person name="Fraser A."/>
            <person name="Gentles S."/>
            <person name="Goble A."/>
            <person name="Hamlin N."/>
            <person name="Harris D.E."/>
            <person name="Hidalgo J."/>
            <person name="Hodgson G."/>
            <person name="Holroyd S."/>
            <person name="Hornsby T."/>
            <person name="Howarth S."/>
            <person name="Huckle E.J."/>
            <person name="Hunt S."/>
            <person name="Jagels K."/>
            <person name="James K.D."/>
            <person name="Jones L."/>
            <person name="Jones M."/>
            <person name="Leather S."/>
            <person name="McDonald S."/>
            <person name="McLean J."/>
            <person name="Mooney P."/>
            <person name="Moule S."/>
            <person name="Mungall K.L."/>
            <person name="Murphy L.D."/>
            <person name="Niblett D."/>
            <person name="Odell C."/>
            <person name="Oliver K."/>
            <person name="O'Neil S."/>
            <person name="Pearson D."/>
            <person name="Quail M.A."/>
            <person name="Rabbinowitsch E."/>
            <person name="Rutherford K.M."/>
            <person name="Rutter S."/>
            <person name="Saunders D."/>
            <person name="Seeger K."/>
            <person name="Sharp S."/>
            <person name="Skelton J."/>
            <person name="Simmonds M.N."/>
            <person name="Squares R."/>
            <person name="Squares S."/>
            <person name="Stevens K."/>
            <person name="Taylor K."/>
            <person name="Taylor R.G."/>
            <person name="Tivey A."/>
            <person name="Walsh S.V."/>
            <person name="Warren T."/>
            <person name="Whitehead S."/>
            <person name="Woodward J.R."/>
            <person name="Volckaert G."/>
            <person name="Aert R."/>
            <person name="Robben J."/>
            <person name="Grymonprez B."/>
            <person name="Weltjens I."/>
            <person name="Vanstreels E."/>
            <person name="Rieger M."/>
            <person name="Schaefer M."/>
            <person name="Mueller-Auer S."/>
            <person name="Gabel C."/>
            <person name="Fuchs M."/>
            <person name="Duesterhoeft A."/>
            <person name="Fritzc C."/>
            <person name="Holzer E."/>
            <person name="Moestl D."/>
            <person name="Hilbert H."/>
            <person name="Borzym K."/>
            <person name="Langer I."/>
            <person name="Beck A."/>
            <person name="Lehrach H."/>
            <person name="Reinhardt R."/>
            <person name="Pohl T.M."/>
            <person name="Eger P."/>
            <person name="Zimmermann W."/>
            <person name="Wedler H."/>
            <person name="Wambutt R."/>
            <person name="Purnelle B."/>
            <person name="Goffeau A."/>
            <person name="Cadieu E."/>
            <person name="Dreano S."/>
            <person name="Gloux S."/>
            <person name="Lelaure V."/>
            <person name="Mottier S."/>
            <person name="Galibert F."/>
            <person name="Aves S.J."/>
            <person name="Xiang Z."/>
            <person name="Hunt C."/>
            <person name="Moore K."/>
            <person name="Hurst S.M."/>
            <person name="Lucas M."/>
            <person name="Rochet M."/>
            <person name="Gaillardin C."/>
            <person name="Tallada V.A."/>
            <person name="Garzon A."/>
            <person name="Thode G."/>
            <person name="Daga R.R."/>
            <person name="Cruzado L."/>
            <person name="Jimenez J."/>
            <person name="Sanchez M."/>
            <person name="del Rey F."/>
            <person name="Benito J."/>
            <person name="Dominguez A."/>
            <person name="Revuelta J.L."/>
            <person name="Moreno S."/>
            <person name="Armstrong J."/>
            <person name="Forsburg S.L."/>
            <person name="Cerutti L."/>
            <person name="Lowe T."/>
            <person name="McCombie W.R."/>
            <person name="Paulsen I."/>
            <person name="Potashkin J."/>
            <person name="Shpakovski G.V."/>
            <person name="Ussery D."/>
            <person name="Barrell B.G."/>
            <person name="Nurse P."/>
        </authorList>
    </citation>
    <scope>NUCLEOTIDE SEQUENCE [LARGE SCALE GENOMIC DNA]</scope>
    <source>
        <strain>972 / ATCC 24843</strain>
    </source>
</reference>
<reference key="3">
    <citation type="journal article" date="2006" name="Nat. Biotechnol.">
        <title>ORFeome cloning and global analysis of protein localization in the fission yeast Schizosaccharomyces pombe.</title>
        <authorList>
            <person name="Matsuyama A."/>
            <person name="Arai R."/>
            <person name="Yashiroda Y."/>
            <person name="Shirai A."/>
            <person name="Kamata A."/>
            <person name="Sekido S."/>
            <person name="Kobayashi Y."/>
            <person name="Hashimoto A."/>
            <person name="Hamamoto M."/>
            <person name="Hiraoka Y."/>
            <person name="Horinouchi S."/>
            <person name="Yoshida M."/>
        </authorList>
    </citation>
    <scope>SUBCELLULAR LOCATION [LARGE SCALE ANALYSIS]</scope>
</reference>
<accession>O13629</accession>
<gene>
    <name type="primary">aim22</name>
    <name type="ORF">pi037</name>
    <name type="ORF">SPBC17A3.09c</name>
</gene>
<proteinExistence type="inferred from homology"/>
<keyword id="KW-0067">ATP-binding</keyword>
<keyword id="KW-0963">Cytoplasm</keyword>
<keyword id="KW-0436">Ligase</keyword>
<keyword id="KW-0547">Nucleotide-binding</keyword>
<keyword id="KW-1185">Reference proteome</keyword>
<dbReference type="EC" id="6.3.1.20"/>
<dbReference type="EMBL" id="AB004537">
    <property type="protein sequence ID" value="BAA21417.1"/>
    <property type="molecule type" value="Genomic_DNA"/>
</dbReference>
<dbReference type="EMBL" id="CU329671">
    <property type="protein sequence ID" value="CAB51768.1"/>
    <property type="molecule type" value="Genomic_DNA"/>
</dbReference>
<dbReference type="PIR" id="T39701">
    <property type="entry name" value="T39701"/>
</dbReference>
<dbReference type="RefSeq" id="NP_595591.1">
    <property type="nucleotide sequence ID" value="NM_001021487.2"/>
</dbReference>
<dbReference type="SMR" id="O13629"/>
<dbReference type="FunCoup" id="O13629">
    <property type="interactions" value="351"/>
</dbReference>
<dbReference type="STRING" id="284812.O13629"/>
<dbReference type="PaxDb" id="4896-SPBC17A3.09c.1"/>
<dbReference type="EnsemblFungi" id="SPBC17A3.09c.1">
    <property type="protein sequence ID" value="SPBC17A3.09c.1:pep"/>
    <property type="gene ID" value="SPBC17A3.09c"/>
</dbReference>
<dbReference type="GeneID" id="2539766"/>
<dbReference type="KEGG" id="spo:2539766"/>
<dbReference type="PomBase" id="SPBC17A3.09c">
    <property type="gene designation" value="aim22"/>
</dbReference>
<dbReference type="VEuPathDB" id="FungiDB:SPBC17A3.09c"/>
<dbReference type="eggNOG" id="KOG3159">
    <property type="taxonomic scope" value="Eukaryota"/>
</dbReference>
<dbReference type="HOGENOM" id="CLU_022986_3_1_1"/>
<dbReference type="InParanoid" id="O13629"/>
<dbReference type="OMA" id="RYQNWDW"/>
<dbReference type="PhylomeDB" id="O13629"/>
<dbReference type="Reactome" id="R-SPO-9857492">
    <property type="pathway name" value="Protein lipoylation"/>
</dbReference>
<dbReference type="UniPathway" id="UPA00537">
    <property type="reaction ID" value="UER00594"/>
</dbReference>
<dbReference type="UniPathway" id="UPA00537">
    <property type="reaction ID" value="UER00595"/>
</dbReference>
<dbReference type="PRO" id="PR:O13629"/>
<dbReference type="Proteomes" id="UP000002485">
    <property type="component" value="Chromosome II"/>
</dbReference>
<dbReference type="GO" id="GO:0005737">
    <property type="term" value="C:cytoplasm"/>
    <property type="evidence" value="ECO:0007005"/>
    <property type="project" value="PomBase"/>
</dbReference>
<dbReference type="GO" id="GO:0005739">
    <property type="term" value="C:mitochondrion"/>
    <property type="evidence" value="ECO:0000318"/>
    <property type="project" value="GO_Central"/>
</dbReference>
<dbReference type="GO" id="GO:0005524">
    <property type="term" value="F:ATP binding"/>
    <property type="evidence" value="ECO:0007669"/>
    <property type="project" value="UniProtKB-KW"/>
</dbReference>
<dbReference type="GO" id="GO:0016979">
    <property type="term" value="F:lipoate-protein ligase activity"/>
    <property type="evidence" value="ECO:0000255"/>
    <property type="project" value="PomBase"/>
</dbReference>
<dbReference type="GO" id="GO:0017118">
    <property type="term" value="F:lipoyltransferase activity"/>
    <property type="evidence" value="ECO:0000318"/>
    <property type="project" value="GO_Central"/>
</dbReference>
<dbReference type="GO" id="GO:0051604">
    <property type="term" value="P:protein maturation"/>
    <property type="evidence" value="ECO:0000303"/>
    <property type="project" value="PomBase"/>
</dbReference>
<dbReference type="GO" id="GO:0036211">
    <property type="term" value="P:protein modification process"/>
    <property type="evidence" value="ECO:0007669"/>
    <property type="project" value="InterPro"/>
</dbReference>
<dbReference type="CDD" id="cd16443">
    <property type="entry name" value="LplA"/>
    <property type="match status" value="1"/>
</dbReference>
<dbReference type="FunFam" id="3.30.930.10:FF:000072">
    <property type="entry name" value="Lipoate--protein ligase"/>
    <property type="match status" value="1"/>
</dbReference>
<dbReference type="Gene3D" id="3.30.930.10">
    <property type="entry name" value="Bira Bifunctional Protein, Domain 2"/>
    <property type="match status" value="1"/>
</dbReference>
<dbReference type="Gene3D" id="3.30.390.50">
    <property type="entry name" value="CO dehydrogenase flavoprotein, C-terminal domain"/>
    <property type="match status" value="1"/>
</dbReference>
<dbReference type="InterPro" id="IPR045864">
    <property type="entry name" value="aa-tRNA-synth_II/BPL/LPL"/>
</dbReference>
<dbReference type="InterPro" id="IPR004143">
    <property type="entry name" value="BPL_LPL_catalytic"/>
</dbReference>
<dbReference type="InterPro" id="IPR004562">
    <property type="entry name" value="LipoylTrfase_LipoateP_Ligase"/>
</dbReference>
<dbReference type="NCBIfam" id="TIGR00545">
    <property type="entry name" value="lipoyltrans"/>
    <property type="match status" value="1"/>
</dbReference>
<dbReference type="PANTHER" id="PTHR12561">
    <property type="entry name" value="LIPOATE-PROTEIN LIGASE"/>
    <property type="match status" value="1"/>
</dbReference>
<dbReference type="PANTHER" id="PTHR12561:SF3">
    <property type="entry name" value="LIPOYLTRANSFERASE 1, MITOCHONDRIAL"/>
    <property type="match status" value="1"/>
</dbReference>
<dbReference type="Pfam" id="PF21948">
    <property type="entry name" value="LplA-B_cat"/>
    <property type="match status" value="1"/>
</dbReference>
<dbReference type="SUPFAM" id="SSF55681">
    <property type="entry name" value="Class II aaRS and biotin synthetases"/>
    <property type="match status" value="1"/>
</dbReference>
<dbReference type="PROSITE" id="PS51733">
    <property type="entry name" value="BPL_LPL_CATALYTIC"/>
    <property type="match status" value="1"/>
</dbReference>
<protein>
    <recommendedName>
        <fullName>Putative lipoate-protein ligase A</fullName>
        <ecNumber>6.3.1.20</ecNumber>
    </recommendedName>
</protein>
<name>LPLA_SCHPO</name>
<organism>
    <name type="scientific">Schizosaccharomyces pombe (strain 972 / ATCC 24843)</name>
    <name type="common">Fission yeast</name>
    <dbReference type="NCBI Taxonomy" id="284812"/>
    <lineage>
        <taxon>Eukaryota</taxon>
        <taxon>Fungi</taxon>
        <taxon>Dikarya</taxon>
        <taxon>Ascomycota</taxon>
        <taxon>Taphrinomycotina</taxon>
        <taxon>Schizosaccharomycetes</taxon>
        <taxon>Schizosaccharomycetales</taxon>
        <taxon>Schizosaccharomycetaceae</taxon>
        <taxon>Schizosaccharomyces</taxon>
    </lineage>
</organism>
<sequence>MLEAVTNPKSSLATFSKQLNGLLQAKVVVCKSVNPYFNLALENYLYENSTAKHCLLLYTNSPSVIIGRNQNPWVEANVKLCRDNFVNIIRRKSGGGTVFHDFGNLNYSVLMNREEFSHTENASIMIQALRNLGVHARLNQRHDIVLAQSQRKISGSAYKISRNRCYHHGTMLLNSDLEGVREYLRSPSTGILSKGVSSTRSPVSNTKLLKAEFIKQVISCFLLHKSHSTTTKPLSKPRASSKRLYDIEPKSVITLEQNDLLGVPSILKAVNELQSWEWTFGQTPSFKQHLESTELSVSMDISVVHGRLEKVIFSTPNATLEHELSSIPWTGLCYESGFANTFLISGIHSKEAISILKWISDSI</sequence>
<comment type="function">
    <text evidence="1">Catalyzes both the ATP-dependent activation of exogenously supplied lipoate to lipoyl-AMP and the transfer of the activated lipoyl onto the lipoyl domains of lipoate-dependent enzymes.</text>
</comment>
<comment type="catalytic activity">
    <reaction>
        <text>L-lysyl-[lipoyl-carrier protein] + (R)-lipoate + ATP = N(6)-[(R)-lipoyl]-L-lysyl-[lipoyl-carrier protein] + AMP + diphosphate + H(+)</text>
        <dbReference type="Rhea" id="RHEA:49288"/>
        <dbReference type="Rhea" id="RHEA-COMP:10500"/>
        <dbReference type="Rhea" id="RHEA-COMP:10502"/>
        <dbReference type="ChEBI" id="CHEBI:15378"/>
        <dbReference type="ChEBI" id="CHEBI:29969"/>
        <dbReference type="ChEBI" id="CHEBI:30616"/>
        <dbReference type="ChEBI" id="CHEBI:33019"/>
        <dbReference type="ChEBI" id="CHEBI:83088"/>
        <dbReference type="ChEBI" id="CHEBI:83099"/>
        <dbReference type="ChEBI" id="CHEBI:456215"/>
        <dbReference type="EC" id="6.3.1.20"/>
    </reaction>
</comment>
<comment type="pathway">
    <text>Protein modification; protein lipoylation via exogenous pathway; protein N(6)-(lipoyl)lysine from lipoate: step 1/2.</text>
</comment>
<comment type="pathway">
    <text>Protein modification; protein lipoylation via exogenous pathway; protein N(6)-(lipoyl)lysine from lipoate: step 2/2.</text>
</comment>
<comment type="subunit">
    <text evidence="1">Monomer.</text>
</comment>
<comment type="subcellular location">
    <subcellularLocation>
        <location evidence="3">Cytoplasm</location>
    </subcellularLocation>
</comment>
<comment type="miscellaneous">
    <text evidence="1">In the transfer reaction, the free carboxyl group of lipoic acid is attached via an amide linkage to the epsilon-amino group of a specific lysine residue of lipoyl domains of lipoate-dependent enzymes.</text>
</comment>
<comment type="similarity">
    <text evidence="4">Belongs to the LplA family.</text>
</comment>
<evidence type="ECO:0000250" key="1"/>
<evidence type="ECO:0000255" key="2">
    <source>
        <dbReference type="PROSITE-ProRule" id="PRU01067"/>
    </source>
</evidence>
<evidence type="ECO:0000269" key="3">
    <source>
    </source>
</evidence>
<evidence type="ECO:0000305" key="4"/>